<accession>Q0HNT2</accession>
<proteinExistence type="inferred from homology"/>
<gene>
    <name evidence="1" type="primary">rplV</name>
    <name type="ordered locus">Shewmr4_0204</name>
</gene>
<reference key="1">
    <citation type="submission" date="2006-08" db="EMBL/GenBank/DDBJ databases">
        <title>Complete sequence of Shewanella sp. MR-4.</title>
        <authorList>
            <consortium name="US DOE Joint Genome Institute"/>
            <person name="Copeland A."/>
            <person name="Lucas S."/>
            <person name="Lapidus A."/>
            <person name="Barry K."/>
            <person name="Detter J.C."/>
            <person name="Glavina del Rio T."/>
            <person name="Hammon N."/>
            <person name="Israni S."/>
            <person name="Dalin E."/>
            <person name="Tice H."/>
            <person name="Pitluck S."/>
            <person name="Kiss H."/>
            <person name="Brettin T."/>
            <person name="Bruce D."/>
            <person name="Han C."/>
            <person name="Tapia R."/>
            <person name="Gilna P."/>
            <person name="Schmutz J."/>
            <person name="Larimer F."/>
            <person name="Land M."/>
            <person name="Hauser L."/>
            <person name="Kyrpides N."/>
            <person name="Mikhailova N."/>
            <person name="Nealson K."/>
            <person name="Konstantinidis K."/>
            <person name="Klappenbach J."/>
            <person name="Tiedje J."/>
            <person name="Richardson P."/>
        </authorList>
    </citation>
    <scope>NUCLEOTIDE SEQUENCE [LARGE SCALE GENOMIC DNA]</scope>
    <source>
        <strain>MR-4</strain>
    </source>
</reference>
<organism>
    <name type="scientific">Shewanella sp. (strain MR-4)</name>
    <dbReference type="NCBI Taxonomy" id="60480"/>
    <lineage>
        <taxon>Bacteria</taxon>
        <taxon>Pseudomonadati</taxon>
        <taxon>Pseudomonadota</taxon>
        <taxon>Gammaproteobacteria</taxon>
        <taxon>Alteromonadales</taxon>
        <taxon>Shewanellaceae</taxon>
        <taxon>Shewanella</taxon>
    </lineage>
</organism>
<dbReference type="EMBL" id="CP000446">
    <property type="protein sequence ID" value="ABI37285.1"/>
    <property type="molecule type" value="Genomic_DNA"/>
</dbReference>
<dbReference type="RefSeq" id="WP_006083595.1">
    <property type="nucleotide sequence ID" value="NC_008321.1"/>
</dbReference>
<dbReference type="SMR" id="Q0HNT2"/>
<dbReference type="GeneID" id="94726191"/>
<dbReference type="KEGG" id="she:Shewmr4_0204"/>
<dbReference type="HOGENOM" id="CLU_083987_3_3_6"/>
<dbReference type="GO" id="GO:0022625">
    <property type="term" value="C:cytosolic large ribosomal subunit"/>
    <property type="evidence" value="ECO:0007669"/>
    <property type="project" value="TreeGrafter"/>
</dbReference>
<dbReference type="GO" id="GO:0019843">
    <property type="term" value="F:rRNA binding"/>
    <property type="evidence" value="ECO:0007669"/>
    <property type="project" value="UniProtKB-UniRule"/>
</dbReference>
<dbReference type="GO" id="GO:0003735">
    <property type="term" value="F:structural constituent of ribosome"/>
    <property type="evidence" value="ECO:0007669"/>
    <property type="project" value="InterPro"/>
</dbReference>
<dbReference type="GO" id="GO:0006412">
    <property type="term" value="P:translation"/>
    <property type="evidence" value="ECO:0007669"/>
    <property type="project" value="UniProtKB-UniRule"/>
</dbReference>
<dbReference type="CDD" id="cd00336">
    <property type="entry name" value="Ribosomal_L22"/>
    <property type="match status" value="1"/>
</dbReference>
<dbReference type="FunFam" id="3.90.470.10:FF:000001">
    <property type="entry name" value="50S ribosomal protein L22"/>
    <property type="match status" value="1"/>
</dbReference>
<dbReference type="Gene3D" id="3.90.470.10">
    <property type="entry name" value="Ribosomal protein L22/L17"/>
    <property type="match status" value="1"/>
</dbReference>
<dbReference type="HAMAP" id="MF_01331_B">
    <property type="entry name" value="Ribosomal_uL22_B"/>
    <property type="match status" value="1"/>
</dbReference>
<dbReference type="InterPro" id="IPR001063">
    <property type="entry name" value="Ribosomal_uL22"/>
</dbReference>
<dbReference type="InterPro" id="IPR005727">
    <property type="entry name" value="Ribosomal_uL22_bac/chlpt-type"/>
</dbReference>
<dbReference type="InterPro" id="IPR047867">
    <property type="entry name" value="Ribosomal_uL22_bac/org-type"/>
</dbReference>
<dbReference type="InterPro" id="IPR018260">
    <property type="entry name" value="Ribosomal_uL22_CS"/>
</dbReference>
<dbReference type="InterPro" id="IPR036394">
    <property type="entry name" value="Ribosomal_uL22_sf"/>
</dbReference>
<dbReference type="NCBIfam" id="TIGR01044">
    <property type="entry name" value="rplV_bact"/>
    <property type="match status" value="1"/>
</dbReference>
<dbReference type="PANTHER" id="PTHR13501">
    <property type="entry name" value="CHLOROPLAST 50S RIBOSOMAL PROTEIN L22-RELATED"/>
    <property type="match status" value="1"/>
</dbReference>
<dbReference type="PANTHER" id="PTHR13501:SF8">
    <property type="entry name" value="LARGE RIBOSOMAL SUBUNIT PROTEIN UL22M"/>
    <property type="match status" value="1"/>
</dbReference>
<dbReference type="Pfam" id="PF00237">
    <property type="entry name" value="Ribosomal_L22"/>
    <property type="match status" value="1"/>
</dbReference>
<dbReference type="SUPFAM" id="SSF54843">
    <property type="entry name" value="Ribosomal protein L22"/>
    <property type="match status" value="1"/>
</dbReference>
<dbReference type="PROSITE" id="PS00464">
    <property type="entry name" value="RIBOSOMAL_L22"/>
    <property type="match status" value="1"/>
</dbReference>
<comment type="function">
    <text evidence="1">This protein binds specifically to 23S rRNA; its binding is stimulated by other ribosomal proteins, e.g. L4, L17, and L20. It is important during the early stages of 50S assembly. It makes multiple contacts with different domains of the 23S rRNA in the assembled 50S subunit and ribosome (By similarity).</text>
</comment>
<comment type="function">
    <text evidence="1">The globular domain of the protein is located near the polypeptide exit tunnel on the outside of the subunit, while an extended beta-hairpin is found that lines the wall of the exit tunnel in the center of the 70S ribosome.</text>
</comment>
<comment type="subunit">
    <text evidence="1">Part of the 50S ribosomal subunit.</text>
</comment>
<comment type="similarity">
    <text evidence="1">Belongs to the universal ribosomal protein uL22 family.</text>
</comment>
<feature type="chain" id="PRO_1000052650" description="Large ribosomal subunit protein uL22">
    <location>
        <begin position="1"/>
        <end position="110"/>
    </location>
</feature>
<sequence>MEVLAKHRFARTSAQKARLVADQIRGLPVAKALEILTFSPKKAAVLVKKVLDSAIANAEHNEGADIDELKVGAVFVDEGPTMKRIMPRAKGRADRIMKRTSHITVVVSDR</sequence>
<keyword id="KW-0687">Ribonucleoprotein</keyword>
<keyword id="KW-0689">Ribosomal protein</keyword>
<keyword id="KW-0694">RNA-binding</keyword>
<keyword id="KW-0699">rRNA-binding</keyword>
<protein>
    <recommendedName>
        <fullName evidence="1">Large ribosomal subunit protein uL22</fullName>
    </recommendedName>
    <alternativeName>
        <fullName evidence="2">50S ribosomal protein L22</fullName>
    </alternativeName>
</protein>
<name>RL22_SHESM</name>
<evidence type="ECO:0000255" key="1">
    <source>
        <dbReference type="HAMAP-Rule" id="MF_01331"/>
    </source>
</evidence>
<evidence type="ECO:0000305" key="2"/>